<organism>
    <name type="scientific">Methylobacterium sp. (strain 4-46)</name>
    <dbReference type="NCBI Taxonomy" id="426117"/>
    <lineage>
        <taxon>Bacteria</taxon>
        <taxon>Pseudomonadati</taxon>
        <taxon>Pseudomonadota</taxon>
        <taxon>Alphaproteobacteria</taxon>
        <taxon>Hyphomicrobiales</taxon>
        <taxon>Methylobacteriaceae</taxon>
        <taxon>Methylobacterium</taxon>
    </lineage>
</organism>
<evidence type="ECO:0000255" key="1">
    <source>
        <dbReference type="HAMAP-Rule" id="MF_01187"/>
    </source>
</evidence>
<sequence>MADTPSVEPTRIDPKLLELLVCPLTKGRLEYDSARQELISRSAKLAYPIRDGIPIMLPEEARPLAE</sequence>
<gene>
    <name type="ordered locus">M446_0487</name>
</gene>
<accession>B0UM25</accession>
<proteinExistence type="inferred from homology"/>
<comment type="similarity">
    <text evidence="1">Belongs to the UPF0434 family.</text>
</comment>
<protein>
    <recommendedName>
        <fullName evidence="1">UPF0434 protein M446_0487</fullName>
    </recommendedName>
</protein>
<feature type="chain" id="PRO_1000138317" description="UPF0434 protein M446_0487">
    <location>
        <begin position="1"/>
        <end position="66"/>
    </location>
</feature>
<reference key="1">
    <citation type="submission" date="2008-02" db="EMBL/GenBank/DDBJ databases">
        <title>Complete sequence of chromosome of Methylobacterium sp. 4-46.</title>
        <authorList>
            <consortium name="US DOE Joint Genome Institute"/>
            <person name="Copeland A."/>
            <person name="Lucas S."/>
            <person name="Lapidus A."/>
            <person name="Glavina del Rio T."/>
            <person name="Dalin E."/>
            <person name="Tice H."/>
            <person name="Bruce D."/>
            <person name="Goodwin L."/>
            <person name="Pitluck S."/>
            <person name="Chertkov O."/>
            <person name="Brettin T."/>
            <person name="Detter J.C."/>
            <person name="Han C."/>
            <person name="Kuske C.R."/>
            <person name="Schmutz J."/>
            <person name="Larimer F."/>
            <person name="Land M."/>
            <person name="Hauser L."/>
            <person name="Kyrpides N."/>
            <person name="Ivanova N."/>
            <person name="Marx C.J."/>
            <person name="Richardson P."/>
        </authorList>
    </citation>
    <scope>NUCLEOTIDE SEQUENCE [LARGE SCALE GENOMIC DNA]</scope>
    <source>
        <strain>4-46</strain>
    </source>
</reference>
<name>Y487_METS4</name>
<dbReference type="EMBL" id="CP000943">
    <property type="protein sequence ID" value="ACA15050.1"/>
    <property type="molecule type" value="Genomic_DNA"/>
</dbReference>
<dbReference type="RefSeq" id="WP_012330467.1">
    <property type="nucleotide sequence ID" value="NC_010511.1"/>
</dbReference>
<dbReference type="SMR" id="B0UM25"/>
<dbReference type="STRING" id="426117.M446_0487"/>
<dbReference type="KEGG" id="met:M446_0487"/>
<dbReference type="eggNOG" id="COG2835">
    <property type="taxonomic scope" value="Bacteria"/>
</dbReference>
<dbReference type="HOGENOM" id="CLU_155659_2_2_5"/>
<dbReference type="GO" id="GO:0005829">
    <property type="term" value="C:cytosol"/>
    <property type="evidence" value="ECO:0007669"/>
    <property type="project" value="TreeGrafter"/>
</dbReference>
<dbReference type="FunFam" id="2.20.25.10:FF:000002">
    <property type="entry name" value="UPF0434 protein YcaR"/>
    <property type="match status" value="1"/>
</dbReference>
<dbReference type="Gene3D" id="2.20.25.10">
    <property type="match status" value="1"/>
</dbReference>
<dbReference type="HAMAP" id="MF_01187">
    <property type="entry name" value="UPF0434"/>
    <property type="match status" value="1"/>
</dbReference>
<dbReference type="InterPro" id="IPR005651">
    <property type="entry name" value="Trm112-like"/>
</dbReference>
<dbReference type="PANTHER" id="PTHR33505:SF4">
    <property type="entry name" value="PROTEIN PREY, MITOCHONDRIAL"/>
    <property type="match status" value="1"/>
</dbReference>
<dbReference type="PANTHER" id="PTHR33505">
    <property type="entry name" value="ZGC:162634"/>
    <property type="match status" value="1"/>
</dbReference>
<dbReference type="Pfam" id="PF03966">
    <property type="entry name" value="Trm112p"/>
    <property type="match status" value="1"/>
</dbReference>
<dbReference type="SUPFAM" id="SSF158997">
    <property type="entry name" value="Trm112p-like"/>
    <property type="match status" value="1"/>
</dbReference>